<dbReference type="EC" id="6.3.4.3" evidence="1"/>
<dbReference type="EMBL" id="AM942759">
    <property type="protein sequence ID" value="CAR41561.1"/>
    <property type="molecule type" value="Genomic_DNA"/>
</dbReference>
<dbReference type="RefSeq" id="WP_012367694.1">
    <property type="nucleotide sequence ID" value="NC_010554.1"/>
</dbReference>
<dbReference type="SMR" id="B4ET09"/>
<dbReference type="EnsemblBacteria" id="CAR41561">
    <property type="protein sequence ID" value="CAR41561"/>
    <property type="gene ID" value="PMI0670"/>
</dbReference>
<dbReference type="GeneID" id="6800336"/>
<dbReference type="KEGG" id="pmr:PMI0670"/>
<dbReference type="PATRIC" id="fig|529507.6.peg.652"/>
<dbReference type="eggNOG" id="COG2759">
    <property type="taxonomic scope" value="Bacteria"/>
</dbReference>
<dbReference type="HOGENOM" id="CLU_003601_3_3_6"/>
<dbReference type="UniPathway" id="UPA00193"/>
<dbReference type="Proteomes" id="UP000008319">
    <property type="component" value="Chromosome"/>
</dbReference>
<dbReference type="GO" id="GO:0005524">
    <property type="term" value="F:ATP binding"/>
    <property type="evidence" value="ECO:0007669"/>
    <property type="project" value="UniProtKB-UniRule"/>
</dbReference>
<dbReference type="GO" id="GO:0004329">
    <property type="term" value="F:formate-tetrahydrofolate ligase activity"/>
    <property type="evidence" value="ECO:0007669"/>
    <property type="project" value="UniProtKB-UniRule"/>
</dbReference>
<dbReference type="GO" id="GO:0035999">
    <property type="term" value="P:tetrahydrofolate interconversion"/>
    <property type="evidence" value="ECO:0007669"/>
    <property type="project" value="UniProtKB-UniRule"/>
</dbReference>
<dbReference type="CDD" id="cd00477">
    <property type="entry name" value="FTHFS"/>
    <property type="match status" value="1"/>
</dbReference>
<dbReference type="FunFam" id="3.30.1510.10:FF:000001">
    <property type="entry name" value="Formate--tetrahydrofolate ligase"/>
    <property type="match status" value="1"/>
</dbReference>
<dbReference type="FunFam" id="3.10.410.10:FF:000001">
    <property type="entry name" value="Putative formate--tetrahydrofolate ligase"/>
    <property type="match status" value="1"/>
</dbReference>
<dbReference type="Gene3D" id="3.30.1510.10">
    <property type="entry name" value="Domain 2, N(10)-formyltetrahydrofolate synthetase"/>
    <property type="match status" value="1"/>
</dbReference>
<dbReference type="Gene3D" id="3.10.410.10">
    <property type="entry name" value="Formyltetrahydrofolate synthetase, domain 3"/>
    <property type="match status" value="1"/>
</dbReference>
<dbReference type="Gene3D" id="3.40.50.300">
    <property type="entry name" value="P-loop containing nucleotide triphosphate hydrolases"/>
    <property type="match status" value="1"/>
</dbReference>
<dbReference type="HAMAP" id="MF_01543">
    <property type="entry name" value="FTHFS"/>
    <property type="match status" value="1"/>
</dbReference>
<dbReference type="InterPro" id="IPR000559">
    <property type="entry name" value="Formate_THF_ligase"/>
</dbReference>
<dbReference type="InterPro" id="IPR020628">
    <property type="entry name" value="Formate_THF_ligase_CS"/>
</dbReference>
<dbReference type="InterPro" id="IPR027417">
    <property type="entry name" value="P-loop_NTPase"/>
</dbReference>
<dbReference type="NCBIfam" id="NF010030">
    <property type="entry name" value="PRK13505.1"/>
    <property type="match status" value="1"/>
</dbReference>
<dbReference type="Pfam" id="PF01268">
    <property type="entry name" value="FTHFS"/>
    <property type="match status" value="1"/>
</dbReference>
<dbReference type="SUPFAM" id="SSF52540">
    <property type="entry name" value="P-loop containing nucleoside triphosphate hydrolases"/>
    <property type="match status" value="1"/>
</dbReference>
<dbReference type="PROSITE" id="PS00721">
    <property type="entry name" value="FTHFS_1"/>
    <property type="match status" value="1"/>
</dbReference>
<accession>B4ET09</accession>
<organism>
    <name type="scientific">Proteus mirabilis (strain HI4320)</name>
    <dbReference type="NCBI Taxonomy" id="529507"/>
    <lineage>
        <taxon>Bacteria</taxon>
        <taxon>Pseudomonadati</taxon>
        <taxon>Pseudomonadota</taxon>
        <taxon>Gammaproteobacteria</taxon>
        <taxon>Enterobacterales</taxon>
        <taxon>Morganellaceae</taxon>
        <taxon>Proteus</taxon>
    </lineage>
</organism>
<feature type="chain" id="PRO_1000196820" description="Formate--tetrahydrofolate ligase">
    <location>
        <begin position="1"/>
        <end position="556"/>
    </location>
</feature>
<feature type="binding site" evidence="1">
    <location>
        <begin position="65"/>
        <end position="72"/>
    </location>
    <ligand>
        <name>ATP</name>
        <dbReference type="ChEBI" id="CHEBI:30616"/>
    </ligand>
</feature>
<name>FTHS_PROMH</name>
<gene>
    <name evidence="1" type="primary">fhs</name>
    <name type="ordered locus">PMI0670</name>
</gene>
<keyword id="KW-0067">ATP-binding</keyword>
<keyword id="KW-0436">Ligase</keyword>
<keyword id="KW-0547">Nucleotide-binding</keyword>
<keyword id="KW-0554">One-carbon metabolism</keyword>
<keyword id="KW-1185">Reference proteome</keyword>
<sequence length="556" mass="59996">MKSDIEISHQAPLLPIQDIAKKINVDQDDIEFYGKYKAKFSQSIWSKITSKKQGKLVLVTSINPTPAGEGKTTVTVGLGQALNQLGKSAIIALREPSLGPCFGLKGGAAGGGYSQVVPMEDLNLHFTGDFHAITSANNLLAAMLDNSLYQGNPLNINPKKIIFKRCMDMNDRALRHLVIGLGGDKDGVVREDSFVITVASEIMSILCLAKDINDLKQRLARIIVAYNYEGEPVSAEDLNAVGAMATLLKDALNPNLVQTLENTPAIIHGGPFANIAHGCNSLRATKLALQLADITVTEAGFGADLGAEKFFDIKCRIGDLQPDCAVLVVTTKALKYNGGLGKTQWDHENLTALATGIENLGKHIENLKKYGVPVIVTVNAYVTDSAKEHEFIAQYCQQRGCRFAISQVWEKGGAGGIELANQVIDTLENDAPQFQLLYPDNMPLKQKIETIAQEIYGAKGVTYNANAQEMLTKIEDMGFGHFPICMAKTQYSLSDDPALLGRPTDFTINIREVYVSAGAGFVVSLTGTINTMPGLPKKPAAMAMDVDDHGAIKGLF</sequence>
<comment type="catalytic activity">
    <reaction evidence="1">
        <text>(6S)-5,6,7,8-tetrahydrofolate + formate + ATP = (6R)-10-formyltetrahydrofolate + ADP + phosphate</text>
        <dbReference type="Rhea" id="RHEA:20221"/>
        <dbReference type="ChEBI" id="CHEBI:15740"/>
        <dbReference type="ChEBI" id="CHEBI:30616"/>
        <dbReference type="ChEBI" id="CHEBI:43474"/>
        <dbReference type="ChEBI" id="CHEBI:57453"/>
        <dbReference type="ChEBI" id="CHEBI:195366"/>
        <dbReference type="ChEBI" id="CHEBI:456216"/>
        <dbReference type="EC" id="6.3.4.3"/>
    </reaction>
</comment>
<comment type="pathway">
    <text evidence="1">One-carbon metabolism; tetrahydrofolate interconversion.</text>
</comment>
<comment type="similarity">
    <text evidence="1">Belongs to the formate--tetrahydrofolate ligase family.</text>
</comment>
<protein>
    <recommendedName>
        <fullName evidence="1">Formate--tetrahydrofolate ligase</fullName>
        <ecNumber evidence="1">6.3.4.3</ecNumber>
    </recommendedName>
    <alternativeName>
        <fullName evidence="1">Formyltetrahydrofolate synthetase</fullName>
        <shortName evidence="1">FHS</shortName>
        <shortName evidence="1">FTHFS</shortName>
    </alternativeName>
</protein>
<evidence type="ECO:0000255" key="1">
    <source>
        <dbReference type="HAMAP-Rule" id="MF_01543"/>
    </source>
</evidence>
<reference key="1">
    <citation type="journal article" date="2008" name="J. Bacteriol.">
        <title>Complete genome sequence of uropathogenic Proteus mirabilis, a master of both adherence and motility.</title>
        <authorList>
            <person name="Pearson M.M."/>
            <person name="Sebaihia M."/>
            <person name="Churcher C."/>
            <person name="Quail M.A."/>
            <person name="Seshasayee A.S."/>
            <person name="Luscombe N.M."/>
            <person name="Abdellah Z."/>
            <person name="Arrosmith C."/>
            <person name="Atkin B."/>
            <person name="Chillingworth T."/>
            <person name="Hauser H."/>
            <person name="Jagels K."/>
            <person name="Moule S."/>
            <person name="Mungall K."/>
            <person name="Norbertczak H."/>
            <person name="Rabbinowitsch E."/>
            <person name="Walker D."/>
            <person name="Whithead S."/>
            <person name="Thomson N.R."/>
            <person name="Rather P.N."/>
            <person name="Parkhill J."/>
            <person name="Mobley H.L.T."/>
        </authorList>
    </citation>
    <scope>NUCLEOTIDE SEQUENCE [LARGE SCALE GENOMIC DNA]</scope>
    <source>
        <strain>HI4320</strain>
    </source>
</reference>
<proteinExistence type="inferred from homology"/>